<comment type="function">
    <text evidence="2 3">Promotes progression through the cell cycle via binding and activation of CDK1 and CDK2. Involved in the spindle-assembly checkpoint. Required for recruitment of MAD2L1, BUBR1 and BUB1 to kinetochores. Required for the correct localization of the active form of Aurora B in prometaphase.</text>
</comment>
<comment type="subunit">
    <text evidence="2 3">Interacts with CDK1 and CDK2. Interacts with AURKB.</text>
</comment>
<comment type="interaction">
    <interactant intactId="EBI-12162209">
        <id>Q5MJ68</id>
    </interactant>
    <interactant intactId="EBI-5773880">
        <id>P56211</id>
        <label>ARPP19</label>
    </interactant>
    <organismsDiffer>false</organismsDiffer>
    <experiments>3</experiments>
</comment>
<comment type="interaction">
    <interactant intactId="EBI-12162209">
        <id>Q5MJ68</id>
    </interactant>
    <interactant intactId="EBI-5455734">
        <id>Q9Y324</id>
        <label>FCF1</label>
    </interactant>
    <organismsDiffer>false</organismsDiffer>
    <experiments>3</experiments>
</comment>
<comment type="interaction">
    <interactant intactId="EBI-12162209">
        <id>Q5MJ68</id>
    </interactant>
    <interactant intactId="EBI-1216080">
        <id>Q9Y250</id>
        <label>LZTS1</label>
    </interactant>
    <organismsDiffer>false</organismsDiffer>
    <experiments>3</experiments>
</comment>
<comment type="interaction">
    <interactant intactId="EBI-12162209">
        <id>Q5MJ68</id>
    </interactant>
    <interactant intactId="EBI-747278">
        <id>P26367</id>
        <label>PAX6</label>
    </interactant>
    <organismsDiffer>false</organismsDiffer>
    <experiments>3</experiments>
</comment>
<comment type="subcellular location">
    <subcellularLocation>
        <location evidence="3">Cytoplasm</location>
    </subcellularLocation>
    <text>Colocalizes with tubulin gamma during interphase. During mitosis, enriched at the spindle poles and the midbody during telophase.</text>
</comment>
<comment type="tissue specificity">
    <text evidence="2">Expressed in a variety of tissues including bone marrow, kidney, small intestine, liver, placenta and testis.</text>
</comment>
<comment type="domain">
    <text evidence="1">The C-terminus is required for CDK2-activation, but not CDK2-binding.</text>
</comment>
<comment type="similarity">
    <text evidence="4">Belongs to the Speedy/Ringo family.</text>
</comment>
<comment type="sequence caution" evidence="4">
    <conflict type="erroneous initiation">
        <sequence resource="EMBL-CDS" id="AAI37245"/>
    </conflict>
    <text>Extended N-terminus.</text>
</comment>
<comment type="sequence caution" evidence="4">
    <conflict type="erroneous initiation">
        <sequence resource="EMBL-CDS" id="AAI37247"/>
    </conflict>
    <text>Extended N-terminus.</text>
</comment>
<comment type="sequence caution" evidence="4">
    <conflict type="erroneous initiation">
        <sequence resource="EMBL-CDS" id="AAI44549"/>
    </conflict>
    <text>Extended N-terminus.</text>
</comment>
<comment type="sequence caution" evidence="4">
    <conflict type="erroneous initiation">
        <sequence resource="EMBL-CDS" id="AAW30396"/>
    </conflict>
    <text>Extended N-terminus.</text>
</comment>
<gene>
    <name evidence="6" type="primary">SPDYC</name>
</gene>
<reference evidence="4 5" key="1">
    <citation type="journal article" date="2005" name="Cell Cycle">
        <title>Identification and comparative analysis of multiple mammalian Speedy/Ringo proteins.</title>
        <authorList>
            <person name="Cheng A."/>
            <person name="Xiong W."/>
            <person name="Ferrell J.E. Jr."/>
            <person name="Solomon M.J."/>
        </authorList>
    </citation>
    <scope>NUCLEOTIDE SEQUENCE [MRNA]</scope>
    <scope>FUNCTION</scope>
    <scope>INTERACTION WITH CDK1 AND CDK2</scope>
    <scope>TISSUE SPECIFICITY</scope>
    <source>
        <tissue evidence="5">Testis</tissue>
    </source>
</reference>
<reference key="2">
    <citation type="journal article" date="2004" name="Genome Res.">
        <title>The status, quality, and expansion of the NIH full-length cDNA project: the Mammalian Gene Collection (MGC).</title>
        <authorList>
            <consortium name="The MGC Project Team"/>
        </authorList>
    </citation>
    <scope>NUCLEOTIDE SEQUENCE [LARGE SCALE MRNA]</scope>
</reference>
<reference key="3">
    <citation type="journal article" date="2010" name="J. Cell Sci.">
        <title>RINGO C is required to sustain the spindle-assembly checkpoint.</title>
        <authorList>
            <person name="Mouron S."/>
            <person name="de Carcer G."/>
            <person name="Seco E."/>
            <person name="Fernandez-Miranda G."/>
            <person name="Malumbres M."/>
            <person name="Nebreda A.R."/>
        </authorList>
    </citation>
    <scope>FUNCTION</scope>
    <scope>INTERACTION WITH AURKB</scope>
    <scope>SUBCELLULAR LOCATION</scope>
</reference>
<protein>
    <recommendedName>
        <fullName>Speedy protein C</fullName>
    </recommendedName>
    <alternativeName>
        <fullName>Rapid inducer of G2/M progression in oocytes C</fullName>
        <shortName>RINGO C</shortName>
        <shortName>hSpy/Ringo C</shortName>
    </alternativeName>
</protein>
<feature type="chain" id="PRO_0000234116" description="Speedy protein C">
    <location>
        <begin position="1"/>
        <end position="274"/>
    </location>
</feature>
<feature type="region of interest" description="Speedy/Ringo box; Required for CDK-binding" evidence="1">
    <location>
        <begin position="37"/>
        <end position="169"/>
    </location>
</feature>
<organism>
    <name type="scientific">Homo sapiens</name>
    <name type="common">Human</name>
    <dbReference type="NCBI Taxonomy" id="9606"/>
    <lineage>
        <taxon>Eukaryota</taxon>
        <taxon>Metazoa</taxon>
        <taxon>Chordata</taxon>
        <taxon>Craniata</taxon>
        <taxon>Vertebrata</taxon>
        <taxon>Euteleostomi</taxon>
        <taxon>Mammalia</taxon>
        <taxon>Eutheria</taxon>
        <taxon>Euarchontoglires</taxon>
        <taxon>Primates</taxon>
        <taxon>Haplorrhini</taxon>
        <taxon>Catarrhini</taxon>
        <taxon>Hominidae</taxon>
        <taxon>Homo</taxon>
    </lineage>
</organism>
<evidence type="ECO:0000250" key="1">
    <source>
        <dbReference type="UniProtKB" id="Q5IBH7"/>
    </source>
</evidence>
<evidence type="ECO:0000269" key="2">
    <source>
    </source>
</evidence>
<evidence type="ECO:0000269" key="3">
    <source>
    </source>
</evidence>
<evidence type="ECO:0000305" key="4"/>
<evidence type="ECO:0000312" key="5">
    <source>
        <dbReference type="EMBL" id="AAW30396.1"/>
    </source>
</evidence>
<evidence type="ECO:0000312" key="6">
    <source>
        <dbReference type="HGNC" id="HGNC:32681"/>
    </source>
</evidence>
<dbReference type="EMBL" id="AY820305">
    <property type="protein sequence ID" value="AAW30396.1"/>
    <property type="status" value="ALT_INIT"/>
    <property type="molecule type" value="mRNA"/>
</dbReference>
<dbReference type="EMBL" id="BC137244">
    <property type="protein sequence ID" value="AAI37245.1"/>
    <property type="status" value="ALT_INIT"/>
    <property type="molecule type" value="mRNA"/>
</dbReference>
<dbReference type="EMBL" id="BC137246">
    <property type="protein sequence ID" value="AAI37247.1"/>
    <property type="status" value="ALT_INIT"/>
    <property type="molecule type" value="mRNA"/>
</dbReference>
<dbReference type="EMBL" id="BC144548">
    <property type="protein sequence ID" value="AAI44549.1"/>
    <property type="status" value="ALT_INIT"/>
    <property type="molecule type" value="mRNA"/>
</dbReference>
<dbReference type="CCDS" id="CCDS31606.2"/>
<dbReference type="RefSeq" id="NP_001008778.2">
    <property type="nucleotide sequence ID" value="NM_001008778.3"/>
</dbReference>
<dbReference type="RefSeq" id="XP_016873197.1">
    <property type="nucleotide sequence ID" value="XM_017017708.1"/>
</dbReference>
<dbReference type="SMR" id="Q5MJ68"/>
<dbReference type="BioGRID" id="132439">
    <property type="interactions" value="48"/>
</dbReference>
<dbReference type="FunCoup" id="Q5MJ68">
    <property type="interactions" value="614"/>
</dbReference>
<dbReference type="IntAct" id="Q5MJ68">
    <property type="interactions" value="11"/>
</dbReference>
<dbReference type="STRING" id="9606.ENSP00000366390"/>
<dbReference type="iPTMnet" id="Q5MJ68"/>
<dbReference type="PhosphoSitePlus" id="Q5MJ68"/>
<dbReference type="BioMuta" id="SPDYC"/>
<dbReference type="DMDM" id="74706914"/>
<dbReference type="PaxDb" id="9606-ENSP00000366390"/>
<dbReference type="ProteomicsDB" id="63584"/>
<dbReference type="Antibodypedia" id="50287">
    <property type="antibodies" value="23 antibodies from 10 providers"/>
</dbReference>
<dbReference type="DNASU" id="387778"/>
<dbReference type="Ensembl" id="ENST00000377185.3">
    <property type="protein sequence ID" value="ENSP00000366390.3"/>
    <property type="gene ID" value="ENSG00000204710.3"/>
</dbReference>
<dbReference type="GeneID" id="387778"/>
<dbReference type="KEGG" id="hsa:387778"/>
<dbReference type="MANE-Select" id="ENST00000377185.3">
    <property type="protein sequence ID" value="ENSP00000366390.3"/>
    <property type="RefSeq nucleotide sequence ID" value="NM_001008778.3"/>
    <property type="RefSeq protein sequence ID" value="NP_001008778.2"/>
</dbReference>
<dbReference type="UCSC" id="uc010rnz.3">
    <property type="organism name" value="human"/>
</dbReference>
<dbReference type="AGR" id="HGNC:32681"/>
<dbReference type="CTD" id="387778"/>
<dbReference type="GeneCards" id="SPDYC"/>
<dbReference type="HGNC" id="HGNC:32681">
    <property type="gene designation" value="SPDYC"/>
</dbReference>
<dbReference type="HPA" id="ENSG00000204710">
    <property type="expression patterns" value="Group enriched (liver, testis)"/>
</dbReference>
<dbReference type="MIM" id="614030">
    <property type="type" value="gene"/>
</dbReference>
<dbReference type="neXtProt" id="NX_Q5MJ68"/>
<dbReference type="OpenTargets" id="ENSG00000204710"/>
<dbReference type="PharmGKB" id="PA144596271"/>
<dbReference type="VEuPathDB" id="HostDB:ENSG00000204710"/>
<dbReference type="eggNOG" id="ENOG502SPHM">
    <property type="taxonomic scope" value="Eukaryota"/>
</dbReference>
<dbReference type="GeneTree" id="ENSGT00940000154524"/>
<dbReference type="HOGENOM" id="CLU_070353_2_1_1"/>
<dbReference type="InParanoid" id="Q5MJ68"/>
<dbReference type="OrthoDB" id="9442170at2759"/>
<dbReference type="PAN-GO" id="Q5MJ68">
    <property type="GO annotations" value="1 GO annotation based on evolutionary models"/>
</dbReference>
<dbReference type="PhylomeDB" id="Q5MJ68"/>
<dbReference type="TreeFam" id="TF329827"/>
<dbReference type="PathwayCommons" id="Q5MJ68"/>
<dbReference type="SignaLink" id="Q5MJ68"/>
<dbReference type="BioGRID-ORCS" id="387778">
    <property type="hits" value="23 hits in 1158 CRISPR screens"/>
</dbReference>
<dbReference type="GenomeRNAi" id="387778"/>
<dbReference type="Pharos" id="Q5MJ68">
    <property type="development level" value="Tdark"/>
</dbReference>
<dbReference type="PRO" id="PR:Q5MJ68"/>
<dbReference type="Proteomes" id="UP000005640">
    <property type="component" value="Chromosome 11"/>
</dbReference>
<dbReference type="RNAct" id="Q5MJ68">
    <property type="molecule type" value="protein"/>
</dbReference>
<dbReference type="Bgee" id="ENSG00000204710">
    <property type="expression patterns" value="Expressed in primordial germ cell in gonad and 37 other cell types or tissues"/>
</dbReference>
<dbReference type="GO" id="GO:0005737">
    <property type="term" value="C:cytoplasm"/>
    <property type="evidence" value="ECO:0007669"/>
    <property type="project" value="UniProtKB-SubCell"/>
</dbReference>
<dbReference type="GO" id="GO:0005634">
    <property type="term" value="C:nucleus"/>
    <property type="evidence" value="ECO:0000250"/>
    <property type="project" value="UniProtKB"/>
</dbReference>
<dbReference type="GO" id="GO:0019901">
    <property type="term" value="F:protein kinase binding"/>
    <property type="evidence" value="ECO:0000353"/>
    <property type="project" value="UniProtKB"/>
</dbReference>
<dbReference type="InterPro" id="IPR020984">
    <property type="entry name" value="Speedy"/>
</dbReference>
<dbReference type="InterPro" id="IPR052316">
    <property type="entry name" value="Speedy-Ringo_regulator"/>
</dbReference>
<dbReference type="PANTHER" id="PTHR31545">
    <property type="entry name" value="SEEDY PROTEIN A/C FAMILY MEMBER"/>
    <property type="match status" value="1"/>
</dbReference>
<dbReference type="PANTHER" id="PTHR31545:SF2">
    <property type="entry name" value="SPEEDY PROTEIN C"/>
    <property type="match status" value="1"/>
</dbReference>
<dbReference type="Pfam" id="PF11357">
    <property type="entry name" value="Spy1"/>
    <property type="match status" value="1"/>
</dbReference>
<name>SPDYC_HUMAN</name>
<proteinExistence type="evidence at protein level"/>
<keyword id="KW-0131">Cell cycle</keyword>
<keyword id="KW-0963">Cytoplasm</keyword>
<keyword id="KW-1185">Reference proteome</keyword>
<accession>Q5MJ68</accession>
<accession>B2RP32</accession>
<accession>B7ZMH7</accession>
<sequence>MSDSQDPTTSPVVTTQVELGGCSRQGGGNGFLRFRQHQEVQAFLSLLEDSFVQEFLSKDPCFQISDKYLLAMVLVYFQRAHLKLSEYTHSSLFLALYLANDMEEDLEGPKCEIFPWALGKDWCLRVGKFLHQRDKLWARMGFRAVVSRQCCEEVMAKEPFHWAWTRDRRPHHGGVQRVCPQVPVRLPRGPGLSPPHCSPCGLPQHCSSHLLKPVSSKCPSLTSECHRPPSQNYLSRVKNAWGGDFLIVLPPQMQLEPGTYSLRIFPKPPARPGH</sequence>